<accession>Q9KUH2</accession>
<feature type="chain" id="PRO_0000216461" description="Probable oxaloacetate decarboxylase gamma chain 1">
    <location>
        <begin position="1"/>
        <end position="86"/>
    </location>
</feature>
<feature type="transmembrane region" description="Helical" evidence="2">
    <location>
        <begin position="11"/>
        <end position="33"/>
    </location>
</feature>
<reference key="1">
    <citation type="journal article" date="2000" name="Nature">
        <title>DNA sequence of both chromosomes of the cholera pathogen Vibrio cholerae.</title>
        <authorList>
            <person name="Heidelberg J.F."/>
            <person name="Eisen J.A."/>
            <person name="Nelson W.C."/>
            <person name="Clayton R.A."/>
            <person name="Gwinn M.L."/>
            <person name="Dodson R.J."/>
            <person name="Haft D.H."/>
            <person name="Hickey E.K."/>
            <person name="Peterson J.D."/>
            <person name="Umayam L.A."/>
            <person name="Gill S.R."/>
            <person name="Nelson K.E."/>
            <person name="Read T.D."/>
            <person name="Tettelin H."/>
            <person name="Richardson D.L."/>
            <person name="Ermolaeva M.D."/>
            <person name="Vamathevan J.J."/>
            <person name="Bass S."/>
            <person name="Qin H."/>
            <person name="Dragoi I."/>
            <person name="Sellers P."/>
            <person name="McDonald L.A."/>
            <person name="Utterback T.R."/>
            <person name="Fleischmann R.D."/>
            <person name="Nierman W.C."/>
            <person name="White O."/>
            <person name="Salzberg S.L."/>
            <person name="Smith H.O."/>
            <person name="Colwell R.R."/>
            <person name="Mekalanos J.J."/>
            <person name="Venter J.C."/>
            <person name="Fraser C.M."/>
        </authorList>
    </citation>
    <scope>NUCLEOTIDE SEQUENCE [LARGE SCALE GENOMIC DNA]</scope>
    <source>
        <strain>ATCC 39315 / El Tor Inaba N16961</strain>
    </source>
</reference>
<dbReference type="EC" id="7.2.4.2"/>
<dbReference type="EMBL" id="AE003852">
    <property type="protein sequence ID" value="AAF93717.1"/>
    <property type="status" value="ALT_INIT"/>
    <property type="molecule type" value="Genomic_DNA"/>
</dbReference>
<dbReference type="PIR" id="F82308">
    <property type="entry name" value="F82308"/>
</dbReference>
<dbReference type="RefSeq" id="NP_230200.2">
    <property type="nucleotide sequence ID" value="NC_002505.1"/>
</dbReference>
<dbReference type="RefSeq" id="WP_000148780.1">
    <property type="nucleotide sequence ID" value="NZ_LT906614.1"/>
</dbReference>
<dbReference type="SMR" id="Q9KUH2"/>
<dbReference type="STRING" id="243277.VC_0549"/>
<dbReference type="DNASU" id="2615226"/>
<dbReference type="EnsemblBacteria" id="AAF93717">
    <property type="protein sequence ID" value="AAF93717"/>
    <property type="gene ID" value="VC_0549"/>
</dbReference>
<dbReference type="KEGG" id="vch:VC_0549"/>
<dbReference type="PATRIC" id="fig|243277.26.peg.525"/>
<dbReference type="eggNOG" id="COG3630">
    <property type="taxonomic scope" value="Bacteria"/>
</dbReference>
<dbReference type="HOGENOM" id="CLU_168750_2_1_6"/>
<dbReference type="Proteomes" id="UP000000584">
    <property type="component" value="Chromosome 1"/>
</dbReference>
<dbReference type="GO" id="GO:0005886">
    <property type="term" value="C:plasma membrane"/>
    <property type="evidence" value="ECO:0007669"/>
    <property type="project" value="UniProtKB-SubCell"/>
</dbReference>
<dbReference type="GO" id="GO:0015451">
    <property type="term" value="F:decarboxylation-driven active transmembrane transporter activity"/>
    <property type="evidence" value="ECO:0007669"/>
    <property type="project" value="UniProtKB-EC"/>
</dbReference>
<dbReference type="GO" id="GO:0008948">
    <property type="term" value="F:oxaloacetate decarboxylase activity"/>
    <property type="evidence" value="ECO:0007669"/>
    <property type="project" value="UniProtKB-UniRule"/>
</dbReference>
<dbReference type="GO" id="GO:0015081">
    <property type="term" value="F:sodium ion transmembrane transporter activity"/>
    <property type="evidence" value="ECO:0007669"/>
    <property type="project" value="UniProtKB-UniRule"/>
</dbReference>
<dbReference type="GO" id="GO:0036376">
    <property type="term" value="P:sodium ion export across plasma membrane"/>
    <property type="evidence" value="ECO:0007669"/>
    <property type="project" value="InterPro"/>
</dbReference>
<dbReference type="HAMAP" id="MF_00404">
    <property type="entry name" value="OadG"/>
    <property type="match status" value="1"/>
</dbReference>
<dbReference type="InterPro" id="IPR005899">
    <property type="entry name" value="Na_pump_deCOase"/>
</dbReference>
<dbReference type="InterPro" id="IPR023424">
    <property type="entry name" value="OadG"/>
</dbReference>
<dbReference type="NCBIfam" id="TIGR01195">
    <property type="entry name" value="oadG_fam"/>
    <property type="match status" value="1"/>
</dbReference>
<dbReference type="NCBIfam" id="NF003004">
    <property type="entry name" value="PRK03814.1"/>
    <property type="match status" value="1"/>
</dbReference>
<dbReference type="Pfam" id="PF04277">
    <property type="entry name" value="OAD_gamma"/>
    <property type="match status" value="1"/>
</dbReference>
<comment type="function">
    <text evidence="1">Catalyzes the decarboxylation of oxaloacetate coupled to Na(+) translocation.</text>
</comment>
<comment type="catalytic activity">
    <reaction>
        <text>oxaloacetate + 2 Na(+)(in) + H(+) = pyruvate + 2 Na(+)(out) + CO2</text>
        <dbReference type="Rhea" id="RHEA:57724"/>
        <dbReference type="ChEBI" id="CHEBI:15361"/>
        <dbReference type="ChEBI" id="CHEBI:15378"/>
        <dbReference type="ChEBI" id="CHEBI:16452"/>
        <dbReference type="ChEBI" id="CHEBI:16526"/>
        <dbReference type="ChEBI" id="CHEBI:29101"/>
        <dbReference type="EC" id="7.2.4.2"/>
    </reaction>
</comment>
<comment type="cofactor">
    <cofactor evidence="1">
        <name>Na(+)</name>
        <dbReference type="ChEBI" id="CHEBI:29101"/>
    </cofactor>
</comment>
<comment type="subunit">
    <text evidence="1">Heterotrimer of an alpha, a beta and a gamma subunit.</text>
</comment>
<comment type="subcellular location">
    <subcellularLocation>
        <location evidence="1">Cell membrane</location>
        <topology evidence="1">Single-pass membrane protein</topology>
    </subcellularLocation>
</comment>
<comment type="similarity">
    <text evidence="3">Belongs to the OadG family.</text>
</comment>
<comment type="sequence caution" evidence="3">
    <conflict type="erroneous initiation">
        <sequence resource="EMBL-CDS" id="AAF93717"/>
    </conflict>
</comment>
<protein>
    <recommendedName>
        <fullName>Probable oxaloacetate decarboxylase gamma chain 1</fullName>
        <ecNumber>7.2.4.2</ecNumber>
    </recommendedName>
</protein>
<evidence type="ECO:0000250" key="1"/>
<evidence type="ECO:0000255" key="2"/>
<evidence type="ECO:0000305" key="3"/>
<name>OADG1_VIBCH</name>
<sequence length="86" mass="9170">MTHIGSLLLDAATLMVTGMAVVFLFLTLLVYLVQFMSRVIPQEVPEAAATPKKSQKVQPVTDSVSPQVVAAIAAAVHQHRSATAKQ</sequence>
<proteinExistence type="inferred from homology"/>
<keyword id="KW-1003">Cell membrane</keyword>
<keyword id="KW-0406">Ion transport</keyword>
<keyword id="KW-0472">Membrane</keyword>
<keyword id="KW-1185">Reference proteome</keyword>
<keyword id="KW-0915">Sodium</keyword>
<keyword id="KW-0739">Sodium transport</keyword>
<keyword id="KW-1278">Translocase</keyword>
<keyword id="KW-0812">Transmembrane</keyword>
<keyword id="KW-1133">Transmembrane helix</keyword>
<keyword id="KW-0813">Transport</keyword>
<gene>
    <name type="primary">oadG1</name>
    <name type="ordered locus">VC_0549</name>
</gene>
<organism>
    <name type="scientific">Vibrio cholerae serotype O1 (strain ATCC 39315 / El Tor Inaba N16961)</name>
    <dbReference type="NCBI Taxonomy" id="243277"/>
    <lineage>
        <taxon>Bacteria</taxon>
        <taxon>Pseudomonadati</taxon>
        <taxon>Pseudomonadota</taxon>
        <taxon>Gammaproteobacteria</taxon>
        <taxon>Vibrionales</taxon>
        <taxon>Vibrionaceae</taxon>
        <taxon>Vibrio</taxon>
    </lineage>
</organism>